<sequence length="178" mass="20691">MSSTKDELQLYAKAIYNCAISNHQSLDHWKTMLQLMANILNNEIIKNLISKAYFSQHVISLFIDLCCNKVNQYGINLIKILAENKRLMLLEKLYKEFINLCELYQGVVNITVISAHKLNEEYISKINIMLKKRFFKKINVTYVIDESIIGGLIIKFCDTVINASIHSRLEKLLNILQY</sequence>
<gene>
    <name evidence="1" type="primary">atpH</name>
    <name type="ordered locus">bbp_005</name>
</gene>
<evidence type="ECO:0000255" key="1">
    <source>
        <dbReference type="HAMAP-Rule" id="MF_01416"/>
    </source>
</evidence>
<comment type="function">
    <text evidence="1">F(1)F(0) ATP synthase produces ATP from ADP in the presence of a proton or sodium gradient. F-type ATPases consist of two structural domains, F(1) containing the extramembraneous catalytic core and F(0) containing the membrane proton channel, linked together by a central stalk and a peripheral stalk. During catalysis, ATP synthesis in the catalytic domain of F(1) is coupled via a rotary mechanism of the central stalk subunits to proton translocation.</text>
</comment>
<comment type="function">
    <text evidence="1">This protein is part of the stalk that links CF(0) to CF(1). It either transmits conformational changes from CF(0) to CF(1) or is implicated in proton conduction.</text>
</comment>
<comment type="subunit">
    <text evidence="1">F-type ATPases have 2 components, F(1) - the catalytic core - and F(0) - the membrane proton channel. F(1) has five subunits: alpha(3), beta(3), gamma(1), delta(1), epsilon(1). F(0) has three main subunits: a(1), b(2) and c(10-14). The alpha and beta chains form an alternating ring which encloses part of the gamma chain. F(1) is attached to F(0) by a central stalk formed by the gamma and epsilon chains, while a peripheral stalk is formed by the delta and b chains.</text>
</comment>
<comment type="subcellular location">
    <subcellularLocation>
        <location evidence="1">Cell membrane</location>
        <topology evidence="1">Peripheral membrane protein</topology>
    </subcellularLocation>
</comment>
<comment type="similarity">
    <text evidence="1">Belongs to the ATPase delta chain family.</text>
</comment>
<organism>
    <name type="scientific">Buchnera aphidicola subsp. Baizongia pistaciae (strain Bp)</name>
    <dbReference type="NCBI Taxonomy" id="224915"/>
    <lineage>
        <taxon>Bacteria</taxon>
        <taxon>Pseudomonadati</taxon>
        <taxon>Pseudomonadota</taxon>
        <taxon>Gammaproteobacteria</taxon>
        <taxon>Enterobacterales</taxon>
        <taxon>Erwiniaceae</taxon>
        <taxon>Buchnera</taxon>
    </lineage>
</organism>
<proteinExistence type="inferred from homology"/>
<dbReference type="EMBL" id="AE016826">
    <property type="protein sequence ID" value="AAO26749.1"/>
    <property type="molecule type" value="Genomic_DNA"/>
</dbReference>
<dbReference type="RefSeq" id="WP_011091150.1">
    <property type="nucleotide sequence ID" value="NC_004545.1"/>
</dbReference>
<dbReference type="SMR" id="Q89B42"/>
<dbReference type="STRING" id="224915.bbp_005"/>
<dbReference type="KEGG" id="bab:bbp_005"/>
<dbReference type="eggNOG" id="COG0712">
    <property type="taxonomic scope" value="Bacteria"/>
</dbReference>
<dbReference type="HOGENOM" id="CLU_085114_3_0_6"/>
<dbReference type="OrthoDB" id="9816221at2"/>
<dbReference type="Proteomes" id="UP000000601">
    <property type="component" value="Chromosome"/>
</dbReference>
<dbReference type="GO" id="GO:0005886">
    <property type="term" value="C:plasma membrane"/>
    <property type="evidence" value="ECO:0007669"/>
    <property type="project" value="UniProtKB-SubCell"/>
</dbReference>
<dbReference type="GO" id="GO:0045259">
    <property type="term" value="C:proton-transporting ATP synthase complex"/>
    <property type="evidence" value="ECO:0007669"/>
    <property type="project" value="UniProtKB-KW"/>
</dbReference>
<dbReference type="GO" id="GO:0046933">
    <property type="term" value="F:proton-transporting ATP synthase activity, rotational mechanism"/>
    <property type="evidence" value="ECO:0007669"/>
    <property type="project" value="UniProtKB-UniRule"/>
</dbReference>
<dbReference type="Gene3D" id="1.10.520.20">
    <property type="entry name" value="N-terminal domain of the delta subunit of the F1F0-ATP synthase"/>
    <property type="match status" value="1"/>
</dbReference>
<dbReference type="HAMAP" id="MF_01416">
    <property type="entry name" value="ATP_synth_delta_bact"/>
    <property type="match status" value="1"/>
</dbReference>
<dbReference type="InterPro" id="IPR026015">
    <property type="entry name" value="ATP_synth_OSCP/delta_N_sf"/>
</dbReference>
<dbReference type="InterPro" id="IPR000711">
    <property type="entry name" value="ATPase_OSCP/dsu"/>
</dbReference>
<dbReference type="NCBIfam" id="TIGR01145">
    <property type="entry name" value="ATP_synt_delta"/>
    <property type="match status" value="1"/>
</dbReference>
<dbReference type="NCBIfam" id="NF004402">
    <property type="entry name" value="PRK05758.2-2"/>
    <property type="match status" value="1"/>
</dbReference>
<dbReference type="PANTHER" id="PTHR11910">
    <property type="entry name" value="ATP SYNTHASE DELTA CHAIN"/>
    <property type="match status" value="1"/>
</dbReference>
<dbReference type="Pfam" id="PF00213">
    <property type="entry name" value="OSCP"/>
    <property type="match status" value="1"/>
</dbReference>
<dbReference type="PRINTS" id="PR00125">
    <property type="entry name" value="ATPASEDELTA"/>
</dbReference>
<dbReference type="SUPFAM" id="SSF47928">
    <property type="entry name" value="N-terminal domain of the delta subunit of the F1F0-ATP synthase"/>
    <property type="match status" value="1"/>
</dbReference>
<name>ATPD_BUCBP</name>
<feature type="chain" id="PRO_0000193461" description="ATP synthase subunit delta">
    <location>
        <begin position="1"/>
        <end position="178"/>
    </location>
</feature>
<reference key="1">
    <citation type="journal article" date="2003" name="Proc. Natl. Acad. Sci. U.S.A.">
        <title>Reductive genome evolution in Buchnera aphidicola.</title>
        <authorList>
            <person name="van Ham R.C.H.J."/>
            <person name="Kamerbeek J."/>
            <person name="Palacios C."/>
            <person name="Rausell C."/>
            <person name="Abascal F."/>
            <person name="Bastolla U."/>
            <person name="Fernandez J.M."/>
            <person name="Jimenez L."/>
            <person name="Postigo M."/>
            <person name="Silva F.J."/>
            <person name="Tamames J."/>
            <person name="Viguera E."/>
            <person name="Latorre A."/>
            <person name="Valencia A."/>
            <person name="Moran F."/>
            <person name="Moya A."/>
        </authorList>
    </citation>
    <scope>NUCLEOTIDE SEQUENCE [LARGE SCALE GENOMIC DNA]</scope>
    <source>
        <strain>Bp</strain>
    </source>
</reference>
<keyword id="KW-0066">ATP synthesis</keyword>
<keyword id="KW-1003">Cell membrane</keyword>
<keyword id="KW-0139">CF(1)</keyword>
<keyword id="KW-0375">Hydrogen ion transport</keyword>
<keyword id="KW-0406">Ion transport</keyword>
<keyword id="KW-0472">Membrane</keyword>
<keyword id="KW-1185">Reference proteome</keyword>
<keyword id="KW-0813">Transport</keyword>
<protein>
    <recommendedName>
        <fullName evidence="1">ATP synthase subunit delta</fullName>
    </recommendedName>
    <alternativeName>
        <fullName evidence="1">ATP synthase F(1) sector subunit delta</fullName>
    </alternativeName>
    <alternativeName>
        <fullName evidence="1">F-type ATPase subunit delta</fullName>
        <shortName evidence="1">F-ATPase subunit delta</shortName>
    </alternativeName>
</protein>
<accession>Q89B42</accession>